<reference key="1">
    <citation type="journal article" date="1993" name="DNA Cell Biol.">
        <title>Analysis of the Drosophila gene for the laminin B1 chain.</title>
        <authorList>
            <person name="Gow C.-H."/>
            <person name="Chang H.-Y."/>
            <person name="Lih C.-J."/>
            <person name="Chang T.-W."/>
            <person name="Hui C.-F."/>
        </authorList>
    </citation>
    <scope>NUCLEOTIDE SEQUENCE [GENOMIC DNA]</scope>
    <source>
        <strain>Canton-S</strain>
    </source>
</reference>
<reference key="2">
    <citation type="journal article" date="1988" name="Cell">
        <title>Drosophila substrate adhesion molecule: sequence of laminin B1 chain reveals domains of homology with mouse.</title>
        <authorList>
            <person name="Montell D.J."/>
            <person name="Goodman C.S."/>
        </authorList>
    </citation>
    <scope>NUCLEOTIDE SEQUENCE [MRNA]</scope>
</reference>
<reference key="3">
    <citation type="journal article" date="2000" name="Science">
        <title>The genome sequence of Drosophila melanogaster.</title>
        <authorList>
            <person name="Adams M.D."/>
            <person name="Celniker S.E."/>
            <person name="Holt R.A."/>
            <person name="Evans C.A."/>
            <person name="Gocayne J.D."/>
            <person name="Amanatides P.G."/>
            <person name="Scherer S.E."/>
            <person name="Li P.W."/>
            <person name="Hoskins R.A."/>
            <person name="Galle R.F."/>
            <person name="George R.A."/>
            <person name="Lewis S.E."/>
            <person name="Richards S."/>
            <person name="Ashburner M."/>
            <person name="Henderson S.N."/>
            <person name="Sutton G.G."/>
            <person name="Wortman J.R."/>
            <person name="Yandell M.D."/>
            <person name="Zhang Q."/>
            <person name="Chen L.X."/>
            <person name="Brandon R.C."/>
            <person name="Rogers Y.-H.C."/>
            <person name="Blazej R.G."/>
            <person name="Champe M."/>
            <person name="Pfeiffer B.D."/>
            <person name="Wan K.H."/>
            <person name="Doyle C."/>
            <person name="Baxter E.G."/>
            <person name="Helt G."/>
            <person name="Nelson C.R."/>
            <person name="Miklos G.L.G."/>
            <person name="Abril J.F."/>
            <person name="Agbayani A."/>
            <person name="An H.-J."/>
            <person name="Andrews-Pfannkoch C."/>
            <person name="Baldwin D."/>
            <person name="Ballew R.M."/>
            <person name="Basu A."/>
            <person name="Baxendale J."/>
            <person name="Bayraktaroglu L."/>
            <person name="Beasley E.M."/>
            <person name="Beeson K.Y."/>
            <person name="Benos P.V."/>
            <person name="Berman B.P."/>
            <person name="Bhandari D."/>
            <person name="Bolshakov S."/>
            <person name="Borkova D."/>
            <person name="Botchan M.R."/>
            <person name="Bouck J."/>
            <person name="Brokstein P."/>
            <person name="Brottier P."/>
            <person name="Burtis K.C."/>
            <person name="Busam D.A."/>
            <person name="Butler H."/>
            <person name="Cadieu E."/>
            <person name="Center A."/>
            <person name="Chandra I."/>
            <person name="Cherry J.M."/>
            <person name="Cawley S."/>
            <person name="Dahlke C."/>
            <person name="Davenport L.B."/>
            <person name="Davies P."/>
            <person name="de Pablos B."/>
            <person name="Delcher A."/>
            <person name="Deng Z."/>
            <person name="Mays A.D."/>
            <person name="Dew I."/>
            <person name="Dietz S.M."/>
            <person name="Dodson K."/>
            <person name="Doup L.E."/>
            <person name="Downes M."/>
            <person name="Dugan-Rocha S."/>
            <person name="Dunkov B.C."/>
            <person name="Dunn P."/>
            <person name="Durbin K.J."/>
            <person name="Evangelista C.C."/>
            <person name="Ferraz C."/>
            <person name="Ferriera S."/>
            <person name="Fleischmann W."/>
            <person name="Fosler C."/>
            <person name="Gabrielian A.E."/>
            <person name="Garg N.S."/>
            <person name="Gelbart W.M."/>
            <person name="Glasser K."/>
            <person name="Glodek A."/>
            <person name="Gong F."/>
            <person name="Gorrell J.H."/>
            <person name="Gu Z."/>
            <person name="Guan P."/>
            <person name="Harris M."/>
            <person name="Harris N.L."/>
            <person name="Harvey D.A."/>
            <person name="Heiman T.J."/>
            <person name="Hernandez J.R."/>
            <person name="Houck J."/>
            <person name="Hostin D."/>
            <person name="Houston K.A."/>
            <person name="Howland T.J."/>
            <person name="Wei M.-H."/>
            <person name="Ibegwam C."/>
            <person name="Jalali M."/>
            <person name="Kalush F."/>
            <person name="Karpen G.H."/>
            <person name="Ke Z."/>
            <person name="Kennison J.A."/>
            <person name="Ketchum K.A."/>
            <person name="Kimmel B.E."/>
            <person name="Kodira C.D."/>
            <person name="Kraft C.L."/>
            <person name="Kravitz S."/>
            <person name="Kulp D."/>
            <person name="Lai Z."/>
            <person name="Lasko P."/>
            <person name="Lei Y."/>
            <person name="Levitsky A.A."/>
            <person name="Li J.H."/>
            <person name="Li Z."/>
            <person name="Liang Y."/>
            <person name="Lin X."/>
            <person name="Liu X."/>
            <person name="Mattei B."/>
            <person name="McIntosh T.C."/>
            <person name="McLeod M.P."/>
            <person name="McPherson D."/>
            <person name="Merkulov G."/>
            <person name="Milshina N.V."/>
            <person name="Mobarry C."/>
            <person name="Morris J."/>
            <person name="Moshrefi A."/>
            <person name="Mount S.M."/>
            <person name="Moy M."/>
            <person name="Murphy B."/>
            <person name="Murphy L."/>
            <person name="Muzny D.M."/>
            <person name="Nelson D.L."/>
            <person name="Nelson D.R."/>
            <person name="Nelson K.A."/>
            <person name="Nixon K."/>
            <person name="Nusskern D.R."/>
            <person name="Pacleb J.M."/>
            <person name="Palazzolo M."/>
            <person name="Pittman G.S."/>
            <person name="Pan S."/>
            <person name="Pollard J."/>
            <person name="Puri V."/>
            <person name="Reese M.G."/>
            <person name="Reinert K."/>
            <person name="Remington K."/>
            <person name="Saunders R.D.C."/>
            <person name="Scheeler F."/>
            <person name="Shen H."/>
            <person name="Shue B.C."/>
            <person name="Siden-Kiamos I."/>
            <person name="Simpson M."/>
            <person name="Skupski M.P."/>
            <person name="Smith T.J."/>
            <person name="Spier E."/>
            <person name="Spradling A.C."/>
            <person name="Stapleton M."/>
            <person name="Strong R."/>
            <person name="Sun E."/>
            <person name="Svirskas R."/>
            <person name="Tector C."/>
            <person name="Turner R."/>
            <person name="Venter E."/>
            <person name="Wang A.H."/>
            <person name="Wang X."/>
            <person name="Wang Z.-Y."/>
            <person name="Wassarman D.A."/>
            <person name="Weinstock G.M."/>
            <person name="Weissenbach J."/>
            <person name="Williams S.M."/>
            <person name="Woodage T."/>
            <person name="Worley K.C."/>
            <person name="Wu D."/>
            <person name="Yang S."/>
            <person name="Yao Q.A."/>
            <person name="Ye J."/>
            <person name="Yeh R.-F."/>
            <person name="Zaveri J.S."/>
            <person name="Zhan M."/>
            <person name="Zhang G."/>
            <person name="Zhao Q."/>
            <person name="Zheng L."/>
            <person name="Zheng X.H."/>
            <person name="Zhong F.N."/>
            <person name="Zhong W."/>
            <person name="Zhou X."/>
            <person name="Zhu S.C."/>
            <person name="Zhu X."/>
            <person name="Smith H.O."/>
            <person name="Gibbs R.A."/>
            <person name="Myers E.W."/>
            <person name="Rubin G.M."/>
            <person name="Venter J.C."/>
        </authorList>
    </citation>
    <scope>NUCLEOTIDE SEQUENCE [LARGE SCALE GENOMIC DNA]</scope>
    <source>
        <strain>Berkeley</strain>
    </source>
</reference>
<reference key="4">
    <citation type="journal article" date="2002" name="Genome Biol.">
        <title>Annotation of the Drosophila melanogaster euchromatic genome: a systematic review.</title>
        <authorList>
            <person name="Misra S."/>
            <person name="Crosby M.A."/>
            <person name="Mungall C.J."/>
            <person name="Matthews B.B."/>
            <person name="Campbell K.S."/>
            <person name="Hradecky P."/>
            <person name="Huang Y."/>
            <person name="Kaminker J.S."/>
            <person name="Millburn G.H."/>
            <person name="Prochnik S.E."/>
            <person name="Smith C.D."/>
            <person name="Tupy J.L."/>
            <person name="Whitfield E.J."/>
            <person name="Bayraktaroglu L."/>
            <person name="Berman B.P."/>
            <person name="Bettencourt B.R."/>
            <person name="Celniker S.E."/>
            <person name="de Grey A.D.N.J."/>
            <person name="Drysdale R.A."/>
            <person name="Harris N.L."/>
            <person name="Richter J."/>
            <person name="Russo S."/>
            <person name="Schroeder A.J."/>
            <person name="Shu S.Q."/>
            <person name="Stapleton M."/>
            <person name="Yamada C."/>
            <person name="Ashburner M."/>
            <person name="Gelbart W.M."/>
            <person name="Rubin G.M."/>
            <person name="Lewis S.E."/>
        </authorList>
    </citation>
    <scope>GENOME REANNOTATION</scope>
    <source>
        <strain>Berkeley</strain>
    </source>
</reference>
<reference key="5">
    <citation type="submission" date="2004-08" db="EMBL/GenBank/DDBJ databases">
        <authorList>
            <person name="Stapleton M."/>
            <person name="Carlson J.W."/>
            <person name="Chavez C."/>
            <person name="Frise E."/>
            <person name="George R.A."/>
            <person name="Pacleb J.M."/>
            <person name="Park S."/>
            <person name="Wan K.H."/>
            <person name="Yu C."/>
            <person name="Rubin G.M."/>
            <person name="Celniker S.E."/>
        </authorList>
    </citation>
    <scope>NUCLEOTIDE SEQUENCE [LARGE SCALE MRNA]</scope>
    <source>
        <strain>Berkeley</strain>
        <tissue>Embryo</tissue>
    </source>
</reference>
<reference key="6">
    <citation type="journal article" date="2002" name="Genome Biol.">
        <title>A Drosophila full-length cDNA resource.</title>
        <authorList>
            <person name="Stapleton M."/>
            <person name="Carlson J.W."/>
            <person name="Brokstein P."/>
            <person name="Yu C."/>
            <person name="Champe M."/>
            <person name="George R.A."/>
            <person name="Guarin H."/>
            <person name="Kronmiller B."/>
            <person name="Pacleb J.M."/>
            <person name="Park S."/>
            <person name="Wan K.H."/>
            <person name="Rubin G.M."/>
            <person name="Celniker S.E."/>
        </authorList>
    </citation>
    <scope>NUCLEOTIDE SEQUENCE [LARGE SCALE MRNA] OF 715-1788</scope>
    <source>
        <strain>Berkeley</strain>
        <tissue>Head</tissue>
    </source>
</reference>
<reference key="7">
    <citation type="journal article" date="2007" name="Glycobiology">
        <title>Identification of N-glycosylated proteins from the central nervous system of Drosophila melanogaster.</title>
        <authorList>
            <person name="Koles K."/>
            <person name="Lim J.-M."/>
            <person name="Aoki K."/>
            <person name="Porterfield M."/>
            <person name="Tiemeyer M."/>
            <person name="Wells L."/>
            <person name="Panin V."/>
        </authorList>
    </citation>
    <scope>GLYCOSYLATION [LARGE SCALE ANALYSIS] AT ASN-1493</scope>
    <scope>IDENTIFICATION BY MASS SPECTROMETRY</scope>
    <source>
        <strain>Oregon-R</strain>
        <tissue>Head</tissue>
    </source>
</reference>
<reference key="8">
    <citation type="journal article" date="2018" name="PLoS Genet.">
        <title>Dissection of Nidogen function in Drosophila reveals tissue-specific mechanisms of basement membrane assembly.</title>
        <authorList>
            <person name="Dai J."/>
            <person name="Estrada B."/>
            <person name="Jacobs S."/>
            <person name="Sanchez-Sanchez B.J."/>
            <person name="Tang J."/>
            <person name="Ma M."/>
            <person name="Magadan-Corpas P."/>
            <person name="Pastor-Pareja J.C."/>
            <person name="Martin-Bermudo M.D."/>
        </authorList>
    </citation>
    <scope>FUNCTION</scope>
    <scope>SUBCELLULAR LOCATION</scope>
    <scope>DEVELOPMENTAL STAGE</scope>
    <scope>DISRUPTION PHENOTYPE</scope>
</reference>
<name>LAMB1_DROME</name>
<accession>P11046</accession>
<accession>A4V0D8</accession>
<accession>Q26328</accession>
<accession>Q6AWM6</accession>
<accession>Q8SWY0</accession>
<accession>Q9VLW6</accession>
<accession>Q9XZT4</accession>
<keyword id="KW-0084">Basement membrane</keyword>
<keyword id="KW-0130">Cell adhesion</keyword>
<keyword id="KW-0175">Coiled coil</keyword>
<keyword id="KW-1015">Disulfide bond</keyword>
<keyword id="KW-0272">Extracellular matrix</keyword>
<keyword id="KW-0325">Glycoprotein</keyword>
<keyword id="KW-0424">Laminin EGF-like domain</keyword>
<keyword id="KW-1185">Reference proteome</keyword>
<keyword id="KW-0677">Repeat</keyword>
<keyword id="KW-0964">Secreted</keyword>
<keyword id="KW-0732">Signal</keyword>
<feature type="signal peptide" evidence="2">
    <location>
        <begin position="1"/>
        <end position="24"/>
    </location>
</feature>
<feature type="chain" id="PRO_0000017073" description="Laminin subunit beta-1">
    <location>
        <begin position="25"/>
        <end position="1788"/>
    </location>
</feature>
<feature type="domain" description="Laminin N-terminal" evidence="5">
    <location>
        <begin position="50"/>
        <end position="287"/>
    </location>
</feature>
<feature type="domain" description="Laminin EGF-like 1" evidence="3">
    <location>
        <begin position="288"/>
        <end position="354"/>
    </location>
</feature>
<feature type="domain" description="Laminin EGF-like 2" evidence="3">
    <location>
        <begin position="355"/>
        <end position="417"/>
    </location>
</feature>
<feature type="domain" description="Laminin EGF-like 3" evidence="3">
    <location>
        <begin position="418"/>
        <end position="477"/>
    </location>
</feature>
<feature type="domain" description="Laminin EGF-like 4" evidence="3">
    <location>
        <begin position="478"/>
        <end position="528"/>
    </location>
</feature>
<feature type="domain" description="Laminin EGF-like 5; truncated" evidence="3">
    <location>
        <begin position="529"/>
        <end position="559"/>
    </location>
</feature>
<feature type="domain" description="Laminin IV type B" evidence="4">
    <location>
        <begin position="567"/>
        <end position="783"/>
    </location>
</feature>
<feature type="domain" description="Laminin EGF-like 6" evidence="3">
    <location>
        <begin position="789"/>
        <end position="836"/>
    </location>
</feature>
<feature type="domain" description="Laminin EGF-like 7" evidence="3">
    <location>
        <begin position="837"/>
        <end position="882"/>
    </location>
</feature>
<feature type="domain" description="Laminin EGF-like 8" evidence="3">
    <location>
        <begin position="883"/>
        <end position="932"/>
    </location>
</feature>
<feature type="domain" description="Laminin EGF-like 9" evidence="3">
    <location>
        <begin position="933"/>
        <end position="990"/>
    </location>
</feature>
<feature type="domain" description="Laminin EGF-like 10" evidence="3">
    <location>
        <begin position="991"/>
        <end position="1042"/>
    </location>
</feature>
<feature type="domain" description="Laminin EGF-like 11" evidence="3">
    <location>
        <begin position="1043"/>
        <end position="1093"/>
    </location>
</feature>
<feature type="domain" description="Laminin EGF-like 12" evidence="3">
    <location>
        <begin position="1094"/>
        <end position="1141"/>
    </location>
</feature>
<feature type="domain" description="Laminin EGF-like 13" evidence="3">
    <location>
        <begin position="1142"/>
        <end position="1188"/>
    </location>
</feature>
<feature type="region of interest" description="Disordered" evidence="6">
    <location>
        <begin position="23"/>
        <end position="43"/>
    </location>
</feature>
<feature type="region of interest" description="Domain II">
    <location>
        <begin position="1189"/>
        <end position="1405"/>
    </location>
</feature>
<feature type="region of interest" description="Domain alpha">
    <location>
        <begin position="1406"/>
        <end position="1432"/>
    </location>
</feature>
<feature type="region of interest" description="Domain I">
    <location>
        <begin position="1433"/>
        <end position="1788"/>
    </location>
</feature>
<feature type="region of interest" description="Disordered" evidence="6">
    <location>
        <begin position="1690"/>
        <end position="1719"/>
    </location>
</feature>
<feature type="coiled-coil region" evidence="2">
    <location>
        <begin position="1255"/>
        <end position="1405"/>
    </location>
</feature>
<feature type="coiled-coil region" evidence="2">
    <location>
        <begin position="1453"/>
        <end position="1505"/>
    </location>
</feature>
<feature type="coiled-coil region" evidence="2">
    <location>
        <begin position="1540"/>
        <end position="1561"/>
    </location>
</feature>
<feature type="coiled-coil region" evidence="2">
    <location>
        <begin position="1608"/>
        <end position="1762"/>
    </location>
</feature>
<feature type="short sequence motif" description="Cell attachment site" evidence="2">
    <location>
        <begin position="641"/>
        <end position="643"/>
    </location>
</feature>
<feature type="compositionally biased region" description="Polar residues" evidence="6">
    <location>
        <begin position="1693"/>
        <end position="1708"/>
    </location>
</feature>
<feature type="compositionally biased region" description="Basic and acidic residues" evidence="6">
    <location>
        <begin position="1709"/>
        <end position="1719"/>
    </location>
</feature>
<feature type="glycosylation site" description="N-linked (GlcNAc...) asparagine" evidence="2">
    <location>
        <position position="138"/>
    </location>
</feature>
<feature type="glycosylation site" description="N-linked (GlcNAc...) asparagine" evidence="2">
    <location>
        <position position="201"/>
    </location>
</feature>
<feature type="glycosylation site" description="N-linked (GlcNAc...) asparagine" evidence="2">
    <location>
        <position position="232"/>
    </location>
</feature>
<feature type="glycosylation site" description="N-linked (GlcNAc...) asparagine" evidence="2">
    <location>
        <position position="487"/>
    </location>
</feature>
<feature type="glycosylation site" description="N-linked (GlcNAc...) asparagine" evidence="2">
    <location>
        <position position="591"/>
    </location>
</feature>
<feature type="glycosylation site" description="N-linked (GlcNAc...) asparagine" evidence="2">
    <location>
        <position position="1051"/>
    </location>
</feature>
<feature type="glycosylation site" description="N-linked (GlcNAc...) asparagine" evidence="2">
    <location>
        <position position="1246"/>
    </location>
</feature>
<feature type="glycosylation site" description="N-linked (GlcNAc...) asparagine" evidence="2">
    <location>
        <position position="1301"/>
    </location>
</feature>
<feature type="glycosylation site" description="N-linked (GlcNAc...) asparagine" evidence="2">
    <location>
        <position position="1330"/>
    </location>
</feature>
<feature type="glycosylation site" description="N-linked (GlcNAc...) asparagine" evidence="2">
    <location>
        <position position="1341"/>
    </location>
</feature>
<feature type="glycosylation site" description="N-linked (GlcNAc...) asparagine" evidence="2">
    <location>
        <position position="1473"/>
    </location>
</feature>
<feature type="glycosylation site" description="N-linked (GlcNAc...) asparagine" evidence="7">
    <location>
        <position position="1493"/>
    </location>
</feature>
<feature type="glycosylation site" description="N-linked (GlcNAc...) asparagine" evidence="2">
    <location>
        <position position="1515"/>
    </location>
</feature>
<feature type="glycosylation site" description="N-linked (GlcNAc...) asparagine" evidence="2">
    <location>
        <position position="1581"/>
    </location>
</feature>
<feature type="glycosylation site" description="N-linked (GlcNAc...) asparagine" evidence="2">
    <location>
        <position position="1644"/>
    </location>
</feature>
<feature type="glycosylation site" description="N-linked (GlcNAc...) asparagine" evidence="2">
    <location>
        <position position="1703"/>
    </location>
</feature>
<feature type="disulfide bond" evidence="3">
    <location>
        <begin position="288"/>
        <end position="297"/>
    </location>
</feature>
<feature type="disulfide bond" evidence="3">
    <location>
        <begin position="290"/>
        <end position="318"/>
    </location>
</feature>
<feature type="disulfide bond" evidence="3">
    <location>
        <begin position="320"/>
        <end position="329"/>
    </location>
</feature>
<feature type="disulfide bond" evidence="3">
    <location>
        <begin position="332"/>
        <end position="352"/>
    </location>
</feature>
<feature type="disulfide bond" evidence="3">
    <location>
        <begin position="355"/>
        <end position="364"/>
    </location>
</feature>
<feature type="disulfide bond" evidence="3">
    <location>
        <begin position="357"/>
        <end position="382"/>
    </location>
</feature>
<feature type="disulfide bond" evidence="3">
    <location>
        <begin position="385"/>
        <end position="394"/>
    </location>
</feature>
<feature type="disulfide bond" evidence="3">
    <location>
        <begin position="397"/>
        <end position="415"/>
    </location>
</feature>
<feature type="disulfide bond" evidence="3">
    <location>
        <begin position="418"/>
        <end position="431"/>
    </location>
</feature>
<feature type="disulfide bond" evidence="3">
    <location>
        <begin position="420"/>
        <end position="446"/>
    </location>
</feature>
<feature type="disulfide bond" evidence="3">
    <location>
        <begin position="448"/>
        <end position="457"/>
    </location>
</feature>
<feature type="disulfide bond" evidence="3">
    <location>
        <begin position="460"/>
        <end position="475"/>
    </location>
</feature>
<feature type="disulfide bond" evidence="3">
    <location>
        <begin position="478"/>
        <end position="491"/>
    </location>
</feature>
<feature type="disulfide bond" evidence="3">
    <location>
        <begin position="480"/>
        <end position="498"/>
    </location>
</feature>
<feature type="disulfide bond" evidence="3">
    <location>
        <begin position="500"/>
        <end position="509"/>
    </location>
</feature>
<feature type="disulfide bond" evidence="3">
    <location>
        <begin position="512"/>
        <end position="526"/>
    </location>
</feature>
<feature type="disulfide bond" evidence="3">
    <location>
        <begin position="529"/>
        <end position="541"/>
    </location>
</feature>
<feature type="disulfide bond" evidence="3">
    <location>
        <begin position="531"/>
        <end position="548"/>
    </location>
</feature>
<feature type="disulfide bond" evidence="3">
    <location>
        <begin position="550"/>
        <end position="559"/>
    </location>
</feature>
<feature type="disulfide bond" evidence="3">
    <location>
        <begin position="789"/>
        <end position="801"/>
    </location>
</feature>
<feature type="disulfide bond" evidence="3">
    <location>
        <begin position="791"/>
        <end position="808"/>
    </location>
</feature>
<feature type="disulfide bond" evidence="3">
    <location>
        <begin position="810"/>
        <end position="819"/>
    </location>
</feature>
<feature type="disulfide bond" evidence="3">
    <location>
        <begin position="822"/>
        <end position="834"/>
    </location>
</feature>
<feature type="disulfide bond" evidence="3">
    <location>
        <begin position="837"/>
        <end position="849"/>
    </location>
</feature>
<feature type="disulfide bond" evidence="3">
    <location>
        <begin position="839"/>
        <end position="856"/>
    </location>
</feature>
<feature type="disulfide bond" evidence="3">
    <location>
        <begin position="858"/>
        <end position="867"/>
    </location>
</feature>
<feature type="disulfide bond" evidence="3">
    <location>
        <begin position="870"/>
        <end position="880"/>
    </location>
</feature>
<feature type="disulfide bond" evidence="3">
    <location>
        <begin position="883"/>
        <end position="892"/>
    </location>
</feature>
<feature type="disulfide bond" evidence="3">
    <location>
        <begin position="885"/>
        <end position="899"/>
    </location>
</feature>
<feature type="disulfide bond" evidence="3">
    <location>
        <begin position="902"/>
        <end position="911"/>
    </location>
</feature>
<feature type="disulfide bond" evidence="3">
    <location>
        <begin position="914"/>
        <end position="930"/>
    </location>
</feature>
<feature type="disulfide bond" evidence="3">
    <location>
        <begin position="933"/>
        <end position="949"/>
    </location>
</feature>
<feature type="disulfide bond" evidence="3">
    <location>
        <begin position="935"/>
        <end position="960"/>
    </location>
</feature>
<feature type="disulfide bond" evidence="3">
    <location>
        <begin position="962"/>
        <end position="971"/>
    </location>
</feature>
<feature type="disulfide bond" evidence="3">
    <location>
        <begin position="974"/>
        <end position="988"/>
    </location>
</feature>
<feature type="disulfide bond" evidence="3">
    <location>
        <begin position="991"/>
        <end position="1005"/>
    </location>
</feature>
<feature type="disulfide bond" evidence="3">
    <location>
        <begin position="993"/>
        <end position="1012"/>
    </location>
</feature>
<feature type="disulfide bond" evidence="3">
    <location>
        <begin position="1015"/>
        <end position="1024"/>
    </location>
</feature>
<feature type="disulfide bond" evidence="3">
    <location>
        <begin position="1027"/>
        <end position="1040"/>
    </location>
</feature>
<feature type="disulfide bond" evidence="3">
    <location>
        <begin position="1043"/>
        <end position="1057"/>
    </location>
</feature>
<feature type="disulfide bond" evidence="3">
    <location>
        <begin position="1045"/>
        <end position="1064"/>
    </location>
</feature>
<feature type="disulfide bond" evidence="3">
    <location>
        <begin position="1066"/>
        <end position="1075"/>
    </location>
</feature>
<feature type="disulfide bond" evidence="3">
    <location>
        <begin position="1078"/>
        <end position="1091"/>
    </location>
</feature>
<feature type="disulfide bond" evidence="3">
    <location>
        <begin position="1094"/>
        <end position="1106"/>
    </location>
</feature>
<feature type="disulfide bond" evidence="3">
    <location>
        <begin position="1096"/>
        <end position="1113"/>
    </location>
</feature>
<feature type="disulfide bond" evidence="3">
    <location>
        <begin position="1115"/>
        <end position="1124"/>
    </location>
</feature>
<feature type="disulfide bond" evidence="3">
    <location>
        <begin position="1127"/>
        <end position="1139"/>
    </location>
</feature>
<feature type="disulfide bond" evidence="3">
    <location>
        <begin position="1142"/>
        <end position="1154"/>
    </location>
</feature>
<feature type="disulfide bond" evidence="3">
    <location>
        <begin position="1144"/>
        <end position="1161"/>
    </location>
</feature>
<feature type="disulfide bond" evidence="3">
    <location>
        <begin position="1163"/>
        <end position="1172"/>
    </location>
</feature>
<feature type="disulfide bond" evidence="3">
    <location>
        <begin position="1175"/>
        <end position="1186"/>
    </location>
</feature>
<feature type="disulfide bond" description="Interchain" evidence="9">
    <location>
        <position position="1189"/>
    </location>
</feature>
<feature type="disulfide bond" description="Interchain" evidence="9">
    <location>
        <position position="1192"/>
    </location>
</feature>
<feature type="disulfide bond" description="Interchain" evidence="9">
    <location>
        <position position="1786"/>
    </location>
</feature>
<feature type="sequence conflict" description="In Ref. 1; AAD19752 and 2; AAA28663." evidence="9" ref="1 2">
    <original>L</original>
    <variation>LAL</variation>
    <location>
        <position position="12"/>
    </location>
</feature>
<feature type="sequence conflict" description="In Ref. 1; AAD19752." evidence="9" ref="1">
    <original>L</original>
    <variation>H</variation>
    <location>
        <position position="666"/>
    </location>
</feature>
<feature type="sequence conflict" description="In Ref. 2; AAA28663." evidence="9" ref="2">
    <original>DS</original>
    <variation>VT</variation>
    <location>
        <begin position="724"/>
        <end position="725"/>
    </location>
</feature>
<feature type="sequence conflict" description="In Ref. 1; AAD19752 and 2; AAA28663." evidence="9" ref="1 2">
    <original>KS</original>
    <variation>NA</variation>
    <location>
        <begin position="766"/>
        <end position="767"/>
    </location>
</feature>
<feature type="sequence conflict" description="In Ref. 5; AAT94451." evidence="9" ref="5">
    <original>V</original>
    <variation>I</variation>
    <location>
        <position position="939"/>
    </location>
</feature>
<feature type="sequence conflict" description="In Ref. 1; AAD19752 and 2; AAA28663." evidence="9" ref="1 2">
    <location>
        <begin position="946"/>
        <end position="947"/>
    </location>
</feature>
<feature type="sequence conflict" description="In Ref. 1; AAD19752 and 2; AAA28663." evidence="9" ref="1 2">
    <original>TDRNCKRVENLSNKIQAE</original>
    <variation>SDRIAREWKICLIRFRPN</variation>
    <location>
        <begin position="1356"/>
        <end position="1373"/>
    </location>
</feature>
<proteinExistence type="evidence at protein level"/>
<sequence length="1788" mass="198333">MLELRLIVVIVLALLSWQWDPVDSQRPPQHGRRDRPKYPPNKFIKTHPCERSSCYPATGNLLIGRENRLTASSTCGLHSPERFCILSHLQDKKCFLCDTREETKHDPYKNHRIGQIIYKTKPGTNIPTWWQSENGKENATIQLDLEAEFHFTHLIITFTTFRPAAMYIERSFDFGQTWHIYRYFAYDCKESFPGVPTVLENITDVMCTSRYSNVEPSRNGEVIFRVLPPNINVTDPYAEHVQNQLKMTNLRIQMTKLHKLGDNLLDSRLENEEKYYYGISNMVVRGSCSCYGHASQCLPLDPAFSQADNEDGMVHGRCECTHNTKGMNCEECEDFFNDLPWKPAFGKKTNACKKCECNDHAVSCHFDEAVFTASGFVSGGVCDNCLHNTRGQHCEECMPYFYRDPEQDITSERVCQPCDCDPQGSSDDGICDSLNELEEGAVAGACHCKAFVTGRRCNQCKDGYWNLQSDNPEGCEPCTCNPLGTLNNSGCVMRTGECKCKKYVTGKDCNQCMPETYGLSESPEGCSLCNCDAGGSYDNYCDVISGQCRCRPHMTGRSCSQPKQNYFIPLLPEVHEAEVVDECISYGANGNCSLVAETPDGSFTGIGFTRVPENSELVFTVGDIPRSMPYDAVIRYQSTSRGDWENAFITLVRPDQVDPEGGCGELAAATSSETRIPFSLPDRSRQVVALNEVCLEAGKVYKFRIYFERKRHDVDSPTATILVDSLTLIPRIDVTPIFQGSVLADIRKKDYEKYNCKSSLYDMNYKSDPKCQNLDNILSVFVHDGASMCNCNPTGSLSKVCESNGGYCQCKPNVVGRQCDQCAPGTYGFGPEGCKACDCNSIGSKDKYCDLITGQCQCVPNTYGRECNQCQPGYWNFPECRVCQCNGHAATCDPIQGTCIDCQDSTTGYSCDSCLDGYYGNPLFGSEIGCRPCRCPETVASGLAHADGCSLDTRNNNMLCHCQEGYSGSRCEICADNFFGNPDNGGTCSKCECSNNVDLYDTGNCDRQTGACLKCLYQTTGDHCELCKDGFFGDALQQNCQQCECDFLGTNNTIAHCDRFTGQCPCLPNVQGVRCDQCAENHWKIASGEGCESCNCDPIGALHEQCNSYTGQCQCKPGFGGRACNQCQAHYWGNPNEKCQPCECDQFGAADFQCDRETGNCVCHEGIGGYKCNECARGYIGQFPHCSPCGECFNNWDLILSALEDATTATILRAKEIKQVGATGAYTSEFSELDKKLQHIRNLLQNTSVSLVDIEKLDYETQSLRDQLQASHGRLSETEQNLDDIYNSLSLSGVELESLQNHSRLVQQLSKELKENGIQLQESNIEGALNLTRHAYERVSNLSTLKDEANELASNTDRNCKRVENLSNKIQAEADDLANNNKLIEDYRAELTSLTSQIPELNNQVCGKPGDPCDSLCGGAGCGHCGGFLSCEHGAKTHSEEALKVAKDAETAITSKKDQADQTIRALTQAKLNASEAYEKAKRGFEQSERYLNQTNANIKLAENLFIALNNFQENKTASPSESKELAQKTLDLDLKLEPEEIETLGDQINRAVSSLKNVEAIIYRTKPDLDRVNNLQSIANATKEKADKILDSANSVVESLAAADESQGKAKDAIQQANSNIELAGQDLEKIDEETYSAEAPANNTAQQVEKLAKKVQKLQNNIMKNDRDAKEITKEAGSVKLEAMRARGEANNLQSATSATNQTLTDRASRSENARERAKQLLQRASKLTVDTNAKLKDLNDLQTVYLNKNQQLLRLQAEIGPLNKELNEHLIHIKERGSHYRQCYT</sequence>
<organism>
    <name type="scientific">Drosophila melanogaster</name>
    <name type="common">Fruit fly</name>
    <dbReference type="NCBI Taxonomy" id="7227"/>
    <lineage>
        <taxon>Eukaryota</taxon>
        <taxon>Metazoa</taxon>
        <taxon>Ecdysozoa</taxon>
        <taxon>Arthropoda</taxon>
        <taxon>Hexapoda</taxon>
        <taxon>Insecta</taxon>
        <taxon>Pterygota</taxon>
        <taxon>Neoptera</taxon>
        <taxon>Endopterygota</taxon>
        <taxon>Diptera</taxon>
        <taxon>Brachycera</taxon>
        <taxon>Muscomorpha</taxon>
        <taxon>Ephydroidea</taxon>
        <taxon>Drosophilidae</taxon>
        <taxon>Drosophila</taxon>
        <taxon>Sophophora</taxon>
    </lineage>
</organism>
<protein>
    <recommendedName>
        <fullName>Laminin subunit beta-1</fullName>
    </recommendedName>
    <alternativeName>
        <fullName>Laminin B1 chain</fullName>
    </alternativeName>
</protein>
<dbReference type="EMBL" id="M95811">
    <property type="protein sequence ID" value="AAD19752.1"/>
    <property type="molecule type" value="Genomic_DNA"/>
</dbReference>
<dbReference type="EMBL" id="M19525">
    <property type="protein sequence ID" value="AAA28663.1"/>
    <property type="molecule type" value="mRNA"/>
</dbReference>
<dbReference type="EMBL" id="AE014134">
    <property type="protein sequence ID" value="AAF52563.1"/>
    <property type="molecule type" value="Genomic_DNA"/>
</dbReference>
<dbReference type="EMBL" id="AE014134">
    <property type="protein sequence ID" value="AAN10647.1"/>
    <property type="molecule type" value="Genomic_DNA"/>
</dbReference>
<dbReference type="EMBL" id="BT015222">
    <property type="protein sequence ID" value="AAT94451.1"/>
    <property type="status" value="ALT_FRAME"/>
    <property type="molecule type" value="mRNA"/>
</dbReference>
<dbReference type="EMBL" id="AY095001">
    <property type="protein sequence ID" value="AAM11329.1"/>
    <property type="status" value="ALT_INIT"/>
    <property type="molecule type" value="mRNA"/>
</dbReference>
<dbReference type="PIR" id="A28783">
    <property type="entry name" value="MMFFB1"/>
</dbReference>
<dbReference type="RefSeq" id="NP_476618.1">
    <property type="nucleotide sequence ID" value="NM_057270.5"/>
</dbReference>
<dbReference type="RefSeq" id="NP_723319.1">
    <property type="nucleotide sequence ID" value="NM_164773.3"/>
</dbReference>
<dbReference type="SMR" id="P11046"/>
<dbReference type="BioGRID" id="60207">
    <property type="interactions" value="28"/>
</dbReference>
<dbReference type="FunCoup" id="P11046">
    <property type="interactions" value="73"/>
</dbReference>
<dbReference type="IntAct" id="P11046">
    <property type="interactions" value="24"/>
</dbReference>
<dbReference type="STRING" id="7227.FBpp0079113"/>
<dbReference type="GlyCosmos" id="P11046">
    <property type="glycosylation" value="16 sites, No reported glycans"/>
</dbReference>
<dbReference type="GlyGen" id="P11046">
    <property type="glycosylation" value="17 sites, 1 O-linked glycan (1 site)"/>
</dbReference>
<dbReference type="iPTMnet" id="P11046"/>
<dbReference type="PaxDb" id="7227-FBpp0079113"/>
<dbReference type="EnsemblMetazoa" id="FBtr0079490">
    <property type="protein sequence ID" value="FBpp0079113"/>
    <property type="gene ID" value="FBgn0261800"/>
</dbReference>
<dbReference type="EnsemblMetazoa" id="FBtr0079491">
    <property type="protein sequence ID" value="FBpp0079114"/>
    <property type="gene ID" value="FBgn0261800"/>
</dbReference>
<dbReference type="GeneID" id="34068"/>
<dbReference type="KEGG" id="dme:Dmel_CG7123"/>
<dbReference type="AGR" id="FB:FBgn0289933"/>
<dbReference type="CTD" id="34068"/>
<dbReference type="FlyBase" id="FBgn0289933">
    <property type="gene designation" value="LanB1"/>
</dbReference>
<dbReference type="VEuPathDB" id="VectorBase:FBgn0261800"/>
<dbReference type="eggNOG" id="KOG0994">
    <property type="taxonomic scope" value="Eukaryota"/>
</dbReference>
<dbReference type="GeneTree" id="ENSGT00940000167171"/>
<dbReference type="HOGENOM" id="CLU_001560_1_0_1"/>
<dbReference type="InParanoid" id="P11046"/>
<dbReference type="OMA" id="DYQCDRE"/>
<dbReference type="OrthoDB" id="5985440at2759"/>
<dbReference type="PhylomeDB" id="P11046"/>
<dbReference type="Reactome" id="R-DME-373752">
    <property type="pathway name" value="Netrin-1 signaling"/>
</dbReference>
<dbReference type="SignaLink" id="P11046"/>
<dbReference type="BioGRID-ORCS" id="34068">
    <property type="hits" value="0 hits in 3 CRISPR screens"/>
</dbReference>
<dbReference type="ChiTaRS" id="LanB1">
    <property type="organism name" value="fly"/>
</dbReference>
<dbReference type="GenomeRNAi" id="34068"/>
<dbReference type="PRO" id="PR:P11046"/>
<dbReference type="Proteomes" id="UP000000803">
    <property type="component" value="Chromosome 2L"/>
</dbReference>
<dbReference type="Bgee" id="FBgn0261800">
    <property type="expression patterns" value="Expressed in embryonic/larval hemocyte (Drosophila) and 115 other cell types or tissues"/>
</dbReference>
<dbReference type="GO" id="GO:0005604">
    <property type="term" value="C:basement membrane"/>
    <property type="evidence" value="ECO:0000314"/>
    <property type="project" value="FlyBase"/>
</dbReference>
<dbReference type="GO" id="GO:0031012">
    <property type="term" value="C:extracellular matrix"/>
    <property type="evidence" value="ECO:0007005"/>
    <property type="project" value="FlyBase"/>
</dbReference>
<dbReference type="GO" id="GO:0005576">
    <property type="term" value="C:extracellular region"/>
    <property type="evidence" value="ECO:0007669"/>
    <property type="project" value="UniProtKB-KW"/>
</dbReference>
<dbReference type="GO" id="GO:0005925">
    <property type="term" value="C:focal adhesion"/>
    <property type="evidence" value="ECO:0000314"/>
    <property type="project" value="FlyBase"/>
</dbReference>
<dbReference type="GO" id="GO:0005201">
    <property type="term" value="F:extracellular matrix structural constituent"/>
    <property type="evidence" value="ECO:0000315"/>
    <property type="project" value="FlyBase"/>
</dbReference>
<dbReference type="GO" id="GO:0048513">
    <property type="term" value="P:animal organ development"/>
    <property type="evidence" value="ECO:0000315"/>
    <property type="project" value="FlyBase"/>
</dbReference>
<dbReference type="GO" id="GO:0070831">
    <property type="term" value="P:basement membrane assembly"/>
    <property type="evidence" value="ECO:0000315"/>
    <property type="project" value="FlyBase"/>
</dbReference>
<dbReference type="GO" id="GO:0071711">
    <property type="term" value="P:basement membrane organization"/>
    <property type="evidence" value="ECO:0000315"/>
    <property type="project" value="UniProtKB"/>
</dbReference>
<dbReference type="GO" id="GO:0055013">
    <property type="term" value="P:cardiac muscle cell development"/>
    <property type="evidence" value="ECO:0000315"/>
    <property type="project" value="FlyBase"/>
</dbReference>
<dbReference type="GO" id="GO:0033627">
    <property type="term" value="P:cell adhesion mediated by integrin"/>
    <property type="evidence" value="ECO:0000314"/>
    <property type="project" value="FlyBase"/>
</dbReference>
<dbReference type="GO" id="GO:0016477">
    <property type="term" value="P:cell migration"/>
    <property type="evidence" value="ECO:0000315"/>
    <property type="project" value="FlyBase"/>
</dbReference>
<dbReference type="GO" id="GO:0050829">
    <property type="term" value="P:defense response to Gram-negative bacterium"/>
    <property type="evidence" value="ECO:0007001"/>
    <property type="project" value="FlyBase"/>
</dbReference>
<dbReference type="GO" id="GO:0003143">
    <property type="term" value="P:embryonic heart tube morphogenesis"/>
    <property type="evidence" value="ECO:0000315"/>
    <property type="project" value="FlyBase"/>
</dbReference>
<dbReference type="GO" id="GO:0030198">
    <property type="term" value="P:extracellular matrix organization"/>
    <property type="evidence" value="ECO:0000315"/>
    <property type="project" value="FlyBase"/>
</dbReference>
<dbReference type="GO" id="GO:0007297">
    <property type="term" value="P:follicle cell of egg chamber migration"/>
    <property type="evidence" value="ECO:0000315"/>
    <property type="project" value="FlyBase"/>
</dbReference>
<dbReference type="GO" id="GO:0008406">
    <property type="term" value="P:gonad development"/>
    <property type="evidence" value="ECO:0000315"/>
    <property type="project" value="FlyBase"/>
</dbReference>
<dbReference type="GO" id="GO:0007476">
    <property type="term" value="P:imaginal disc-derived wing morphogenesis"/>
    <property type="evidence" value="ECO:0000315"/>
    <property type="project" value="FlyBase"/>
</dbReference>
<dbReference type="GO" id="GO:0045089">
    <property type="term" value="P:positive regulation of innate immune response"/>
    <property type="evidence" value="ECO:0007001"/>
    <property type="project" value="FlyBase"/>
</dbReference>
<dbReference type="GO" id="GO:0034446">
    <property type="term" value="P:substrate adhesion-dependent cell spreading"/>
    <property type="evidence" value="ECO:0000314"/>
    <property type="project" value="FlyBase"/>
</dbReference>
<dbReference type="CDD" id="cd22302">
    <property type="entry name" value="cc_DmLAMB1-like_C"/>
    <property type="match status" value="1"/>
</dbReference>
<dbReference type="CDD" id="cd00055">
    <property type="entry name" value="EGF_Lam"/>
    <property type="match status" value="13"/>
</dbReference>
<dbReference type="FunFam" id="2.10.25.10:FF:000011">
    <property type="entry name" value="Cadherin EGF LAG seven-pass G-type receptor"/>
    <property type="match status" value="1"/>
</dbReference>
<dbReference type="FunFam" id="2.10.25.10:FF:000084">
    <property type="entry name" value="Laminin subunit alpha 3"/>
    <property type="match status" value="1"/>
</dbReference>
<dbReference type="FunFam" id="2.10.25.10:FF:000209">
    <property type="entry name" value="Laminin subunit alpha 5"/>
    <property type="match status" value="1"/>
</dbReference>
<dbReference type="FunFam" id="2.10.25.10:FF:000065">
    <property type="entry name" value="Laminin subunit beta 1"/>
    <property type="match status" value="1"/>
</dbReference>
<dbReference type="FunFam" id="2.10.25.10:FF:000101">
    <property type="entry name" value="Laminin subunit beta 1"/>
    <property type="match status" value="1"/>
</dbReference>
<dbReference type="FunFam" id="2.10.25.10:FF:000130">
    <property type="entry name" value="Laminin subunit beta 1"/>
    <property type="match status" value="1"/>
</dbReference>
<dbReference type="FunFam" id="2.10.25.10:FF:000145">
    <property type="entry name" value="Laminin subunit beta 1"/>
    <property type="match status" value="1"/>
</dbReference>
<dbReference type="FunFam" id="2.60.120.260:FF:000010">
    <property type="entry name" value="Laminin subunit beta 1"/>
    <property type="match status" value="1"/>
</dbReference>
<dbReference type="FunFam" id="2.10.25.10:FF:000135">
    <property type="entry name" value="Laminin subunit beta 4"/>
    <property type="match status" value="2"/>
</dbReference>
<dbReference type="FunFam" id="2.10.25.10:FF:000280">
    <property type="entry name" value="Laminin subunit beta 4"/>
    <property type="match status" value="1"/>
</dbReference>
<dbReference type="FunFam" id="2.170.300.10:FF:000001">
    <property type="entry name" value="Laminin subunit beta-1"/>
    <property type="match status" value="1"/>
</dbReference>
<dbReference type="Gene3D" id="2.60.120.260">
    <property type="entry name" value="Galactose-binding domain-like"/>
    <property type="match status" value="1"/>
</dbReference>
<dbReference type="Gene3D" id="2.10.25.10">
    <property type="entry name" value="Laminin"/>
    <property type="match status" value="11"/>
</dbReference>
<dbReference type="Gene3D" id="2.170.300.10">
    <property type="entry name" value="Tie2 ligand-binding domain superfamily"/>
    <property type="match status" value="1"/>
</dbReference>
<dbReference type="InterPro" id="IPR000742">
    <property type="entry name" value="EGF-like_dom"/>
</dbReference>
<dbReference type="InterPro" id="IPR050440">
    <property type="entry name" value="Laminin/Netrin_ECM"/>
</dbReference>
<dbReference type="InterPro" id="IPR013015">
    <property type="entry name" value="Laminin_IV_B"/>
</dbReference>
<dbReference type="InterPro" id="IPR008211">
    <property type="entry name" value="Laminin_N"/>
</dbReference>
<dbReference type="InterPro" id="IPR002049">
    <property type="entry name" value="LE_dom"/>
</dbReference>
<dbReference type="InterPro" id="IPR056863">
    <property type="entry name" value="LMN_ATRN_NET-like_EGF"/>
</dbReference>
<dbReference type="PANTHER" id="PTHR10574:SF406">
    <property type="entry name" value="LAMININ SUBUNIT ALPHA 5"/>
    <property type="match status" value="1"/>
</dbReference>
<dbReference type="PANTHER" id="PTHR10574">
    <property type="entry name" value="NETRIN/LAMININ-RELATED"/>
    <property type="match status" value="1"/>
</dbReference>
<dbReference type="Pfam" id="PF00053">
    <property type="entry name" value="EGF_laminin"/>
    <property type="match status" value="11"/>
</dbReference>
<dbReference type="Pfam" id="PF24973">
    <property type="entry name" value="EGF_LMN_ATRN"/>
    <property type="match status" value="2"/>
</dbReference>
<dbReference type="Pfam" id="PF21199">
    <property type="entry name" value="LAMININ_IV_B"/>
    <property type="match status" value="1"/>
</dbReference>
<dbReference type="Pfam" id="PF00055">
    <property type="entry name" value="Laminin_N"/>
    <property type="match status" value="1"/>
</dbReference>
<dbReference type="PRINTS" id="PR00011">
    <property type="entry name" value="EGFLAMININ"/>
</dbReference>
<dbReference type="SMART" id="SM00181">
    <property type="entry name" value="EGF"/>
    <property type="match status" value="8"/>
</dbReference>
<dbReference type="SMART" id="SM00180">
    <property type="entry name" value="EGF_Lam"/>
    <property type="match status" value="13"/>
</dbReference>
<dbReference type="SMART" id="SM00136">
    <property type="entry name" value="LamNT"/>
    <property type="match status" value="1"/>
</dbReference>
<dbReference type="SUPFAM" id="SSF47857">
    <property type="entry name" value="Apolipophorin-III"/>
    <property type="match status" value="1"/>
</dbReference>
<dbReference type="SUPFAM" id="SSF57196">
    <property type="entry name" value="EGF/Laminin"/>
    <property type="match status" value="13"/>
</dbReference>
<dbReference type="PROSITE" id="PS00022">
    <property type="entry name" value="EGF_1"/>
    <property type="match status" value="10"/>
</dbReference>
<dbReference type="PROSITE" id="PS01186">
    <property type="entry name" value="EGF_2"/>
    <property type="match status" value="2"/>
</dbReference>
<dbReference type="PROSITE" id="PS01248">
    <property type="entry name" value="EGF_LAM_1"/>
    <property type="match status" value="12"/>
</dbReference>
<dbReference type="PROSITE" id="PS50027">
    <property type="entry name" value="EGF_LAM_2"/>
    <property type="match status" value="13"/>
</dbReference>
<dbReference type="PROSITE" id="PS51116">
    <property type="entry name" value="LAMININ_IVB"/>
    <property type="match status" value="1"/>
</dbReference>
<dbReference type="PROSITE" id="PS51117">
    <property type="entry name" value="LAMININ_NTER"/>
    <property type="match status" value="1"/>
</dbReference>
<gene>
    <name type="primary">LanB1</name>
    <name type="synonym">lamB1</name>
    <name type="ORF">CG7123</name>
</gene>
<comment type="function">
    <text evidence="1 8">Binding to cells via a high affinity receptor, laminin is thought to mediate the attachment, migration and organization of cells into tissues during embryonic development by interacting with other extracellular matrix components (By similarity). Required for Ndg localization to the basement membrane (PubMed:30260959).</text>
</comment>
<comment type="subunit">
    <text>Laminin is a complex glycoprotein, consisting of three different polypeptide chains (alpha, beta, gamma), which are bound to each other by disulfide bonds into a cross-shaped molecule comprising one long and three short arms with globules at each end.</text>
</comment>
<comment type="subcellular location">
    <subcellularLocation>
        <location evidence="8">Secreted</location>
        <location evidence="8">Extracellular space</location>
        <location evidence="8">Extracellular matrix</location>
        <location evidence="8">Basement membrane</location>
    </subcellularLocation>
</comment>
<comment type="tissue specificity">
    <text>Found in the basement membranes (major component).</text>
</comment>
<comment type="developmental stage">
    <text evidence="8">In the larva, expressed mainly by fat body adipocytes and blood cells and secreted in the basal membranes that surround the fat body, imaginal disks, tracheae, salivary glands, midgut, mature muscles and heart (at protein level).</text>
</comment>
<comment type="domain">
    <text>The alpha-helical domains I and II are thought to interact with other laminin chains to form a coiled coil structure.</text>
</comment>
<comment type="domain">
    <text>Domains VI and IV are globular.</text>
</comment>
<comment type="disruption phenotype">
    <text evidence="8">Results in strong reduction of Ndg accumulation at the basement membrane in the gut, muscles and ventral nerve cord (PubMed:30260959). RNAi-mediated knockdown in the larvae reduces Ndg accumulation and created holes in the basal membrane of fat bodies (PubMed:30260959).</text>
</comment>
<comment type="sequence caution" evidence="9">
    <conflict type="erroneous initiation">
        <sequence resource="EMBL-CDS" id="AAM11329"/>
    </conflict>
    <text>Truncated N-terminus.</text>
</comment>
<comment type="sequence caution" evidence="9">
    <conflict type="frameshift">
        <sequence resource="EMBL-CDS" id="AAT94451"/>
    </conflict>
</comment>
<evidence type="ECO:0000250" key="1">
    <source>
        <dbReference type="UniProtKB" id="Q13753"/>
    </source>
</evidence>
<evidence type="ECO:0000255" key="2"/>
<evidence type="ECO:0000255" key="3">
    <source>
        <dbReference type="PROSITE-ProRule" id="PRU00460"/>
    </source>
</evidence>
<evidence type="ECO:0000255" key="4">
    <source>
        <dbReference type="PROSITE-ProRule" id="PRU00462"/>
    </source>
</evidence>
<evidence type="ECO:0000255" key="5">
    <source>
        <dbReference type="PROSITE-ProRule" id="PRU00466"/>
    </source>
</evidence>
<evidence type="ECO:0000256" key="6">
    <source>
        <dbReference type="SAM" id="MobiDB-lite"/>
    </source>
</evidence>
<evidence type="ECO:0000269" key="7">
    <source>
    </source>
</evidence>
<evidence type="ECO:0000269" key="8">
    <source>
    </source>
</evidence>
<evidence type="ECO:0000305" key="9"/>